<keyword id="KW-0028">Amino-acid biosynthesis</keyword>
<keyword id="KW-0963">Cytoplasm</keyword>
<keyword id="KW-0413">Isomerase</keyword>
<keyword id="KW-0457">Lysine biosynthesis</keyword>
<keyword id="KW-1185">Reference proteome</keyword>
<feature type="chain" id="PRO_1000011827" description="Diaminopimelate epimerase">
    <location>
        <begin position="1"/>
        <end position="277"/>
    </location>
</feature>
<feature type="active site" description="Proton donor" evidence="1">
    <location>
        <position position="75"/>
    </location>
</feature>
<feature type="active site" description="Proton acceptor" evidence="1">
    <location>
        <position position="216"/>
    </location>
</feature>
<feature type="binding site" evidence="1">
    <location>
        <position position="15"/>
    </location>
    <ligand>
        <name>substrate</name>
    </ligand>
</feature>
<feature type="binding site" evidence="1">
    <location>
        <position position="48"/>
    </location>
    <ligand>
        <name>substrate</name>
    </ligand>
</feature>
<feature type="binding site" evidence="1">
    <location>
        <position position="66"/>
    </location>
    <ligand>
        <name>substrate</name>
    </ligand>
</feature>
<feature type="binding site" evidence="1">
    <location>
        <begin position="76"/>
        <end position="77"/>
    </location>
    <ligand>
        <name>substrate</name>
    </ligand>
</feature>
<feature type="binding site" evidence="1">
    <location>
        <position position="156"/>
    </location>
    <ligand>
        <name>substrate</name>
    </ligand>
</feature>
<feature type="binding site" evidence="1">
    <location>
        <position position="189"/>
    </location>
    <ligand>
        <name>substrate</name>
    </ligand>
</feature>
<feature type="binding site" evidence="1">
    <location>
        <begin position="207"/>
        <end position="208"/>
    </location>
    <ligand>
        <name>substrate</name>
    </ligand>
</feature>
<feature type="binding site" evidence="1">
    <location>
        <begin position="217"/>
        <end position="218"/>
    </location>
    <ligand>
        <name>substrate</name>
    </ligand>
</feature>
<feature type="site" description="Could be important to modulate the pK values of the two catalytic cysteine residues" evidence="1">
    <location>
        <position position="158"/>
    </location>
</feature>
<feature type="site" description="Could be important to modulate the pK values of the two catalytic cysteine residues" evidence="1">
    <location>
        <position position="207"/>
    </location>
</feature>
<dbReference type="EC" id="5.1.1.7" evidence="1"/>
<dbReference type="EMBL" id="CP000697">
    <property type="protein sequence ID" value="ABQ31689.1"/>
    <property type="molecule type" value="Genomic_DNA"/>
</dbReference>
<dbReference type="RefSeq" id="WP_012040099.1">
    <property type="nucleotide sequence ID" value="NC_009484.1"/>
</dbReference>
<dbReference type="SMR" id="A5G1F7"/>
<dbReference type="STRING" id="349163.Acry_2498"/>
<dbReference type="KEGG" id="acr:Acry_2498"/>
<dbReference type="eggNOG" id="COG0253">
    <property type="taxonomic scope" value="Bacteria"/>
</dbReference>
<dbReference type="HOGENOM" id="CLU_053306_1_0_5"/>
<dbReference type="UniPathway" id="UPA00034">
    <property type="reaction ID" value="UER00025"/>
</dbReference>
<dbReference type="Proteomes" id="UP000000245">
    <property type="component" value="Chromosome"/>
</dbReference>
<dbReference type="GO" id="GO:0005829">
    <property type="term" value="C:cytosol"/>
    <property type="evidence" value="ECO:0007669"/>
    <property type="project" value="TreeGrafter"/>
</dbReference>
<dbReference type="GO" id="GO:0008837">
    <property type="term" value="F:diaminopimelate epimerase activity"/>
    <property type="evidence" value="ECO:0007669"/>
    <property type="project" value="UniProtKB-UniRule"/>
</dbReference>
<dbReference type="GO" id="GO:0009089">
    <property type="term" value="P:lysine biosynthetic process via diaminopimelate"/>
    <property type="evidence" value="ECO:0007669"/>
    <property type="project" value="UniProtKB-UniRule"/>
</dbReference>
<dbReference type="Gene3D" id="3.10.310.10">
    <property type="entry name" value="Diaminopimelate Epimerase, Chain A, domain 1"/>
    <property type="match status" value="2"/>
</dbReference>
<dbReference type="HAMAP" id="MF_00197">
    <property type="entry name" value="DAP_epimerase"/>
    <property type="match status" value="1"/>
</dbReference>
<dbReference type="InterPro" id="IPR018510">
    <property type="entry name" value="DAP_epimerase_AS"/>
</dbReference>
<dbReference type="InterPro" id="IPR001653">
    <property type="entry name" value="DAP_epimerase_DapF"/>
</dbReference>
<dbReference type="NCBIfam" id="TIGR00652">
    <property type="entry name" value="DapF"/>
    <property type="match status" value="1"/>
</dbReference>
<dbReference type="PANTHER" id="PTHR31689:SF0">
    <property type="entry name" value="DIAMINOPIMELATE EPIMERASE"/>
    <property type="match status" value="1"/>
</dbReference>
<dbReference type="PANTHER" id="PTHR31689">
    <property type="entry name" value="DIAMINOPIMELATE EPIMERASE, CHLOROPLASTIC"/>
    <property type="match status" value="1"/>
</dbReference>
<dbReference type="Pfam" id="PF01678">
    <property type="entry name" value="DAP_epimerase"/>
    <property type="match status" value="2"/>
</dbReference>
<dbReference type="SUPFAM" id="SSF54506">
    <property type="entry name" value="Diaminopimelate epimerase-like"/>
    <property type="match status" value="2"/>
</dbReference>
<dbReference type="PROSITE" id="PS01326">
    <property type="entry name" value="DAP_EPIMERASE"/>
    <property type="match status" value="1"/>
</dbReference>
<gene>
    <name evidence="1" type="primary">dapF</name>
    <name type="ordered locus">Acry_2498</name>
</gene>
<organism>
    <name type="scientific">Acidiphilium cryptum (strain JF-5)</name>
    <dbReference type="NCBI Taxonomy" id="349163"/>
    <lineage>
        <taxon>Bacteria</taxon>
        <taxon>Pseudomonadati</taxon>
        <taxon>Pseudomonadota</taxon>
        <taxon>Alphaproteobacteria</taxon>
        <taxon>Acetobacterales</taxon>
        <taxon>Acidocellaceae</taxon>
        <taxon>Acidiphilium</taxon>
    </lineage>
</organism>
<sequence>MAAARPFLKMHGAGNDFVVLDARAHPLDLAPAAAARIADRHRGVGCDQIILIERDDGAAAFMRILNADGSESGACGNATRCVAALLAGETGARRLTIRTNAGLLPAEIKGPTLVEVDMGAPKLGWEDIPLAEPADTLSLRLALGPVQNPAACSMGNPHATFFVDDLTHLQIETIGPKLEHARLFPERANIGFARIDAPDRIRLRVWERGAGLTLACGSGACAALVNAHRRGLAARRAEIEMDGGTLTLTWRDDGHVLMEGPVALVFEGELDAAMLAP</sequence>
<protein>
    <recommendedName>
        <fullName evidence="1">Diaminopimelate epimerase</fullName>
        <shortName evidence="1">DAP epimerase</shortName>
        <ecNumber evidence="1">5.1.1.7</ecNumber>
    </recommendedName>
    <alternativeName>
        <fullName evidence="1">PLP-independent amino acid racemase</fullName>
    </alternativeName>
</protein>
<name>DAPF_ACICJ</name>
<reference key="1">
    <citation type="submission" date="2007-05" db="EMBL/GenBank/DDBJ databases">
        <title>Complete sequence of chromosome of Acidiphilium cryptum JF-5.</title>
        <authorList>
            <consortium name="US DOE Joint Genome Institute"/>
            <person name="Copeland A."/>
            <person name="Lucas S."/>
            <person name="Lapidus A."/>
            <person name="Barry K."/>
            <person name="Detter J.C."/>
            <person name="Glavina del Rio T."/>
            <person name="Hammon N."/>
            <person name="Israni S."/>
            <person name="Dalin E."/>
            <person name="Tice H."/>
            <person name="Pitluck S."/>
            <person name="Sims D."/>
            <person name="Brettin T."/>
            <person name="Bruce D."/>
            <person name="Han C."/>
            <person name="Schmutz J."/>
            <person name="Larimer F."/>
            <person name="Land M."/>
            <person name="Hauser L."/>
            <person name="Kyrpides N."/>
            <person name="Kim E."/>
            <person name="Magnuson T."/>
            <person name="Richardson P."/>
        </authorList>
    </citation>
    <scope>NUCLEOTIDE SEQUENCE [LARGE SCALE GENOMIC DNA]</scope>
    <source>
        <strain>JF-5</strain>
    </source>
</reference>
<comment type="function">
    <text evidence="1">Catalyzes the stereoinversion of LL-2,6-diaminopimelate (L,L-DAP) to meso-diaminopimelate (meso-DAP), a precursor of L-lysine and an essential component of the bacterial peptidoglycan.</text>
</comment>
<comment type="catalytic activity">
    <reaction evidence="1">
        <text>(2S,6S)-2,6-diaminopimelate = meso-2,6-diaminopimelate</text>
        <dbReference type="Rhea" id="RHEA:15393"/>
        <dbReference type="ChEBI" id="CHEBI:57609"/>
        <dbReference type="ChEBI" id="CHEBI:57791"/>
        <dbReference type="EC" id="5.1.1.7"/>
    </reaction>
</comment>
<comment type="pathway">
    <text evidence="1">Amino-acid biosynthesis; L-lysine biosynthesis via DAP pathway; DL-2,6-diaminopimelate from LL-2,6-diaminopimelate: step 1/1.</text>
</comment>
<comment type="subunit">
    <text evidence="1">Homodimer.</text>
</comment>
<comment type="subcellular location">
    <subcellularLocation>
        <location evidence="1">Cytoplasm</location>
    </subcellularLocation>
</comment>
<comment type="similarity">
    <text evidence="1">Belongs to the diaminopimelate epimerase family.</text>
</comment>
<evidence type="ECO:0000255" key="1">
    <source>
        <dbReference type="HAMAP-Rule" id="MF_00197"/>
    </source>
</evidence>
<proteinExistence type="inferred from homology"/>
<accession>A5G1F7</accession>